<organism>
    <name type="scientific">Yersinia pseudotuberculosis serotype O:3 (strain YPIII)</name>
    <dbReference type="NCBI Taxonomy" id="502800"/>
    <lineage>
        <taxon>Bacteria</taxon>
        <taxon>Pseudomonadati</taxon>
        <taxon>Pseudomonadota</taxon>
        <taxon>Gammaproteobacteria</taxon>
        <taxon>Enterobacterales</taxon>
        <taxon>Yersiniaceae</taxon>
        <taxon>Yersinia</taxon>
    </lineage>
</organism>
<gene>
    <name evidence="1" type="primary">arnD</name>
    <name type="ordered locus">YPK_1834</name>
</gene>
<sequence length="301" mass="33534">MKQVGLRIDVDTYRGTQYGVPSLLTVLEKHDIRASFFFSVGPDNMGRHLWRLFRPRFLWKMLRSNAASLYGWDILLAGTAWPGKKIAKDFGPLMKAAAMAGHEVGLHAWDHQGWQANVASWSQQQLTEQVQRGVDTLQQSIGQPISCSAAAGWRADERVLAVKQQFDFSYNSDCRGTHPFRPLLPNGSLGSVQIPVTLPTYDEVVGGEVQAENFNDFIIDAILRDSGVSVYTIHAEVEGMSQAAMFEQLLMRAKQQDIEFCPLSKLLPSDLQLLPVGKVIRATFPGREGWLGCQSDIKDAE</sequence>
<proteinExistence type="inferred from homology"/>
<comment type="function">
    <text evidence="1">Catalyzes the deformylation of 4-deoxy-4-formamido-L-arabinose-phosphoundecaprenol to 4-amino-4-deoxy-L-arabinose-phosphoundecaprenol. The modified arabinose is attached to lipid A and is required for resistance to polymyxin and cationic antimicrobial peptides.</text>
</comment>
<comment type="catalytic activity">
    <reaction evidence="1">
        <text>4-deoxy-4-formamido-alpha-L-arabinopyranosyl di-trans,octa-cis-undecaprenyl phosphate + H2O = 4-amino-4-deoxy-alpha-L-arabinopyranosyl di-trans,octa-cis-undecaprenyl phosphate + formate</text>
        <dbReference type="Rhea" id="RHEA:27734"/>
        <dbReference type="ChEBI" id="CHEBI:15377"/>
        <dbReference type="ChEBI" id="CHEBI:15740"/>
        <dbReference type="ChEBI" id="CHEBI:58909"/>
        <dbReference type="ChEBI" id="CHEBI:60463"/>
        <dbReference type="EC" id="3.5.1.n3"/>
    </reaction>
</comment>
<comment type="pathway">
    <text evidence="1">Glycolipid biosynthesis; 4-amino-4-deoxy-alpha-L-arabinose undecaprenyl phosphate biosynthesis; 4-amino-4-deoxy-alpha-L-arabinose undecaprenyl phosphate from UDP-4-deoxy-4-formamido-beta-L-arabinose and undecaprenyl phosphate: step 2/2.</text>
</comment>
<comment type="pathway">
    <text evidence="1">Bacterial outer membrane biogenesis; lipopolysaccharide biosynthesis.</text>
</comment>
<comment type="similarity">
    <text evidence="1">Belongs to the polysaccharide deacetylase family. ArnD deformylase subfamily.</text>
</comment>
<reference key="1">
    <citation type="submission" date="2008-02" db="EMBL/GenBank/DDBJ databases">
        <title>Complete sequence of Yersinia pseudotuberculosis YPIII.</title>
        <authorList>
            <consortium name="US DOE Joint Genome Institute"/>
            <person name="Copeland A."/>
            <person name="Lucas S."/>
            <person name="Lapidus A."/>
            <person name="Glavina del Rio T."/>
            <person name="Dalin E."/>
            <person name="Tice H."/>
            <person name="Bruce D."/>
            <person name="Goodwin L."/>
            <person name="Pitluck S."/>
            <person name="Munk A.C."/>
            <person name="Brettin T."/>
            <person name="Detter J.C."/>
            <person name="Han C."/>
            <person name="Tapia R."/>
            <person name="Schmutz J."/>
            <person name="Larimer F."/>
            <person name="Land M."/>
            <person name="Hauser L."/>
            <person name="Challacombe J.F."/>
            <person name="Green L."/>
            <person name="Lindler L.E."/>
            <person name="Nikolich M.P."/>
            <person name="Richardson P."/>
        </authorList>
    </citation>
    <scope>NUCLEOTIDE SEQUENCE [LARGE SCALE GENOMIC DNA]</scope>
    <source>
        <strain>YPIII</strain>
    </source>
</reference>
<protein>
    <recommendedName>
        <fullName evidence="1">Probable 4-deoxy-4-formamido-L-arabinose-phosphoundecaprenol deformylase ArnD</fullName>
        <ecNumber evidence="1">3.5.1.n3</ecNumber>
    </recommendedName>
</protein>
<dbReference type="EC" id="3.5.1.n3" evidence="1"/>
<dbReference type="EMBL" id="CP000950">
    <property type="protein sequence ID" value="ACA68125.1"/>
    <property type="molecule type" value="Genomic_DNA"/>
</dbReference>
<dbReference type="RefSeq" id="WP_012304018.1">
    <property type="nucleotide sequence ID" value="NZ_CP009792.1"/>
</dbReference>
<dbReference type="SMR" id="B1JJ31"/>
<dbReference type="KEGG" id="ypy:YPK_1834"/>
<dbReference type="PATRIC" id="fig|502800.11.peg.2503"/>
<dbReference type="UniPathway" id="UPA00030"/>
<dbReference type="UniPathway" id="UPA00036">
    <property type="reaction ID" value="UER00496"/>
</dbReference>
<dbReference type="GO" id="GO:0016020">
    <property type="term" value="C:membrane"/>
    <property type="evidence" value="ECO:0007669"/>
    <property type="project" value="GOC"/>
</dbReference>
<dbReference type="GO" id="GO:0016811">
    <property type="term" value="F:hydrolase activity, acting on carbon-nitrogen (but not peptide) bonds, in linear amides"/>
    <property type="evidence" value="ECO:0007669"/>
    <property type="project" value="UniProtKB-UniRule"/>
</dbReference>
<dbReference type="GO" id="GO:0036108">
    <property type="term" value="P:4-amino-4-deoxy-alpha-L-arabinopyranosyl undecaprenyl phosphate biosynthetic process"/>
    <property type="evidence" value="ECO:0007669"/>
    <property type="project" value="UniProtKB-UniRule"/>
</dbReference>
<dbReference type="GO" id="GO:0009245">
    <property type="term" value="P:lipid A biosynthetic process"/>
    <property type="evidence" value="ECO:0007669"/>
    <property type="project" value="UniProtKB-UniRule"/>
</dbReference>
<dbReference type="GO" id="GO:0009103">
    <property type="term" value="P:lipopolysaccharide biosynthetic process"/>
    <property type="evidence" value="ECO:0007669"/>
    <property type="project" value="UniProtKB-UniRule"/>
</dbReference>
<dbReference type="GO" id="GO:0046677">
    <property type="term" value="P:response to antibiotic"/>
    <property type="evidence" value="ECO:0007669"/>
    <property type="project" value="UniProtKB-KW"/>
</dbReference>
<dbReference type="CDD" id="cd10939">
    <property type="entry name" value="CE4_ArnD"/>
    <property type="match status" value="1"/>
</dbReference>
<dbReference type="Gene3D" id="3.20.20.370">
    <property type="entry name" value="Glycoside hydrolase/deacetylase"/>
    <property type="match status" value="1"/>
</dbReference>
<dbReference type="HAMAP" id="MF_01870">
    <property type="entry name" value="ArnD"/>
    <property type="match status" value="1"/>
</dbReference>
<dbReference type="InterPro" id="IPR023557">
    <property type="entry name" value="ArnD"/>
</dbReference>
<dbReference type="InterPro" id="IPR011330">
    <property type="entry name" value="Glyco_hydro/deAcase_b/a-brl"/>
</dbReference>
<dbReference type="InterPro" id="IPR002509">
    <property type="entry name" value="NODB_dom"/>
</dbReference>
<dbReference type="InterPro" id="IPR050248">
    <property type="entry name" value="Polysacc_deacetylase_ArnD"/>
</dbReference>
<dbReference type="NCBIfam" id="NF011923">
    <property type="entry name" value="PRK15394.1"/>
    <property type="match status" value="1"/>
</dbReference>
<dbReference type="PANTHER" id="PTHR10587:SF137">
    <property type="entry name" value="4-DEOXY-4-FORMAMIDO-L-ARABINOSE-PHOSPHOUNDECAPRENOL DEFORMYLASE ARND-RELATED"/>
    <property type="match status" value="1"/>
</dbReference>
<dbReference type="PANTHER" id="PTHR10587">
    <property type="entry name" value="GLYCOSYL TRANSFERASE-RELATED"/>
    <property type="match status" value="1"/>
</dbReference>
<dbReference type="Pfam" id="PF01522">
    <property type="entry name" value="Polysacc_deac_1"/>
    <property type="match status" value="1"/>
</dbReference>
<dbReference type="SUPFAM" id="SSF88713">
    <property type="entry name" value="Glycoside hydrolase/deacetylase"/>
    <property type="match status" value="1"/>
</dbReference>
<dbReference type="PROSITE" id="PS51677">
    <property type="entry name" value="NODB"/>
    <property type="match status" value="1"/>
</dbReference>
<name>ARND_YERPY</name>
<feature type="chain" id="PRO_0000383559" description="Probable 4-deoxy-4-formamido-L-arabinose-phosphoundecaprenol deformylase ArnD">
    <location>
        <begin position="1"/>
        <end position="301"/>
    </location>
</feature>
<feature type="domain" description="NodB homology" evidence="1">
    <location>
        <begin position="2"/>
        <end position="261"/>
    </location>
</feature>
<accession>B1JJ31</accession>
<keyword id="KW-0046">Antibiotic resistance</keyword>
<keyword id="KW-0378">Hydrolase</keyword>
<keyword id="KW-0441">Lipid A biosynthesis</keyword>
<keyword id="KW-0444">Lipid biosynthesis</keyword>
<keyword id="KW-0443">Lipid metabolism</keyword>
<keyword id="KW-0448">Lipopolysaccharide biosynthesis</keyword>
<evidence type="ECO:0000255" key="1">
    <source>
        <dbReference type="HAMAP-Rule" id="MF_01870"/>
    </source>
</evidence>